<evidence type="ECO:0000255" key="1">
    <source>
        <dbReference type="HAMAP-Rule" id="MF_00165"/>
    </source>
</evidence>
<accession>A8AYF8</accession>
<proteinExistence type="inferred from homology"/>
<gene>
    <name evidence="1" type="primary">tmk</name>
    <name type="ordered locus">SGO_1539</name>
</gene>
<keyword id="KW-0067">ATP-binding</keyword>
<keyword id="KW-0418">Kinase</keyword>
<keyword id="KW-0545">Nucleotide biosynthesis</keyword>
<keyword id="KW-0547">Nucleotide-binding</keyword>
<keyword id="KW-1185">Reference proteome</keyword>
<keyword id="KW-0808">Transferase</keyword>
<organism>
    <name type="scientific">Streptococcus gordonii (strain Challis / ATCC 35105 / BCRC 15272 / CH1 / DL1 / V288)</name>
    <dbReference type="NCBI Taxonomy" id="467705"/>
    <lineage>
        <taxon>Bacteria</taxon>
        <taxon>Bacillati</taxon>
        <taxon>Bacillota</taxon>
        <taxon>Bacilli</taxon>
        <taxon>Lactobacillales</taxon>
        <taxon>Streptococcaceae</taxon>
        <taxon>Streptococcus</taxon>
    </lineage>
</organism>
<feature type="chain" id="PRO_1000076978" description="Thymidylate kinase">
    <location>
        <begin position="1"/>
        <end position="212"/>
    </location>
</feature>
<feature type="binding site" evidence="1">
    <location>
        <begin position="11"/>
        <end position="18"/>
    </location>
    <ligand>
        <name>ATP</name>
        <dbReference type="ChEBI" id="CHEBI:30616"/>
    </ligand>
</feature>
<comment type="function">
    <text evidence="1">Phosphorylation of dTMP to form dTDP in both de novo and salvage pathways of dTTP synthesis.</text>
</comment>
<comment type="catalytic activity">
    <reaction evidence="1">
        <text>dTMP + ATP = dTDP + ADP</text>
        <dbReference type="Rhea" id="RHEA:13517"/>
        <dbReference type="ChEBI" id="CHEBI:30616"/>
        <dbReference type="ChEBI" id="CHEBI:58369"/>
        <dbReference type="ChEBI" id="CHEBI:63528"/>
        <dbReference type="ChEBI" id="CHEBI:456216"/>
        <dbReference type="EC" id="2.7.4.9"/>
    </reaction>
</comment>
<comment type="similarity">
    <text evidence="1">Belongs to the thymidylate kinase family.</text>
</comment>
<sequence>MKRGLLVSLEGPDGAGKSSVLEALVPILEAQGHQVVTTREPGGVPISEAIREVILDQNNTEMDGKTELLLYIASRRQHLIEKVLPALEAGKLVIMDRFIDSSVAYQGFGRGLDVADIEWLNQYATDGLKPDLTLYFDLDVEEGLARIAKNKNREVNRLDLEGLEMHQRVRQGYLYSLEKDPERLVKIDASQALEDVVKDSLAVLNQHLNSKS</sequence>
<name>KTHY_STRGC</name>
<reference key="1">
    <citation type="journal article" date="2007" name="J. Bacteriol.">
        <title>Genome-wide transcriptional changes in Streptococcus gordonii in response to competence signaling peptide.</title>
        <authorList>
            <person name="Vickerman M.M."/>
            <person name="Iobst S."/>
            <person name="Jesionowski A.M."/>
            <person name="Gill S.R."/>
        </authorList>
    </citation>
    <scope>NUCLEOTIDE SEQUENCE [LARGE SCALE GENOMIC DNA]</scope>
    <source>
        <strain>Challis / ATCC 35105 / BCRC 15272 / CH1 / DL1 / V288</strain>
    </source>
</reference>
<dbReference type="EC" id="2.7.4.9" evidence="1"/>
<dbReference type="EMBL" id="CP000725">
    <property type="protein sequence ID" value="ABV10958.1"/>
    <property type="molecule type" value="Genomic_DNA"/>
</dbReference>
<dbReference type="RefSeq" id="WP_012130610.1">
    <property type="nucleotide sequence ID" value="NC_009785.1"/>
</dbReference>
<dbReference type="SMR" id="A8AYF8"/>
<dbReference type="STRING" id="467705.SGO_1539"/>
<dbReference type="KEGG" id="sgo:SGO_1539"/>
<dbReference type="eggNOG" id="COG0125">
    <property type="taxonomic scope" value="Bacteria"/>
</dbReference>
<dbReference type="HOGENOM" id="CLU_049131_0_2_9"/>
<dbReference type="Proteomes" id="UP000001131">
    <property type="component" value="Chromosome"/>
</dbReference>
<dbReference type="GO" id="GO:0005829">
    <property type="term" value="C:cytosol"/>
    <property type="evidence" value="ECO:0007669"/>
    <property type="project" value="TreeGrafter"/>
</dbReference>
<dbReference type="GO" id="GO:0005524">
    <property type="term" value="F:ATP binding"/>
    <property type="evidence" value="ECO:0007669"/>
    <property type="project" value="UniProtKB-UniRule"/>
</dbReference>
<dbReference type="GO" id="GO:0004798">
    <property type="term" value="F:dTMP kinase activity"/>
    <property type="evidence" value="ECO:0007669"/>
    <property type="project" value="UniProtKB-UniRule"/>
</dbReference>
<dbReference type="GO" id="GO:0006233">
    <property type="term" value="P:dTDP biosynthetic process"/>
    <property type="evidence" value="ECO:0007669"/>
    <property type="project" value="InterPro"/>
</dbReference>
<dbReference type="GO" id="GO:0006235">
    <property type="term" value="P:dTTP biosynthetic process"/>
    <property type="evidence" value="ECO:0007669"/>
    <property type="project" value="UniProtKB-UniRule"/>
</dbReference>
<dbReference type="GO" id="GO:0006227">
    <property type="term" value="P:dUDP biosynthetic process"/>
    <property type="evidence" value="ECO:0007669"/>
    <property type="project" value="TreeGrafter"/>
</dbReference>
<dbReference type="CDD" id="cd01672">
    <property type="entry name" value="TMPK"/>
    <property type="match status" value="1"/>
</dbReference>
<dbReference type="FunFam" id="3.40.50.300:FF:000225">
    <property type="entry name" value="Thymidylate kinase"/>
    <property type="match status" value="1"/>
</dbReference>
<dbReference type="Gene3D" id="3.40.50.300">
    <property type="entry name" value="P-loop containing nucleotide triphosphate hydrolases"/>
    <property type="match status" value="1"/>
</dbReference>
<dbReference type="HAMAP" id="MF_00165">
    <property type="entry name" value="Thymidylate_kinase"/>
    <property type="match status" value="1"/>
</dbReference>
<dbReference type="InterPro" id="IPR027417">
    <property type="entry name" value="P-loop_NTPase"/>
</dbReference>
<dbReference type="InterPro" id="IPR039430">
    <property type="entry name" value="Thymidylate_kin-like_dom"/>
</dbReference>
<dbReference type="InterPro" id="IPR018095">
    <property type="entry name" value="Thymidylate_kin_CS"/>
</dbReference>
<dbReference type="InterPro" id="IPR018094">
    <property type="entry name" value="Thymidylate_kinase"/>
</dbReference>
<dbReference type="NCBIfam" id="TIGR00041">
    <property type="entry name" value="DTMP_kinase"/>
    <property type="match status" value="1"/>
</dbReference>
<dbReference type="PANTHER" id="PTHR10344">
    <property type="entry name" value="THYMIDYLATE KINASE"/>
    <property type="match status" value="1"/>
</dbReference>
<dbReference type="PANTHER" id="PTHR10344:SF4">
    <property type="entry name" value="UMP-CMP KINASE 2, MITOCHONDRIAL"/>
    <property type="match status" value="1"/>
</dbReference>
<dbReference type="Pfam" id="PF02223">
    <property type="entry name" value="Thymidylate_kin"/>
    <property type="match status" value="1"/>
</dbReference>
<dbReference type="SUPFAM" id="SSF52540">
    <property type="entry name" value="P-loop containing nucleoside triphosphate hydrolases"/>
    <property type="match status" value="1"/>
</dbReference>
<dbReference type="PROSITE" id="PS01331">
    <property type="entry name" value="THYMIDYLATE_KINASE"/>
    <property type="match status" value="1"/>
</dbReference>
<protein>
    <recommendedName>
        <fullName evidence="1">Thymidylate kinase</fullName>
        <ecNumber evidence="1">2.7.4.9</ecNumber>
    </recommendedName>
    <alternativeName>
        <fullName evidence="1">dTMP kinase</fullName>
    </alternativeName>
</protein>